<keyword id="KW-0614">Plasmid</keyword>
<keyword id="KW-1185">Reference proteome</keyword>
<organism>
    <name type="scientific">Cupriavidus necator (strain ATCC 17699 / DSM 428 / KCTC 22496 / NCIMB 10442 / H16 / Stanier 337)</name>
    <name type="common">Ralstonia eutropha</name>
    <dbReference type="NCBI Taxonomy" id="381666"/>
    <lineage>
        <taxon>Bacteria</taxon>
        <taxon>Pseudomonadati</taxon>
        <taxon>Pseudomonadota</taxon>
        <taxon>Betaproteobacteria</taxon>
        <taxon>Burkholderiales</taxon>
        <taxon>Burkholderiaceae</taxon>
        <taxon>Cupriavidus</taxon>
    </lineage>
</organism>
<feature type="chain" id="PRO_0000071620" description="Carbamoyltransferase HypF homolog">
    <location>
        <begin position="1"/>
        <end position="394"/>
    </location>
</feature>
<name>HYPF1_CUPNH</name>
<gene>
    <name type="primary">hypF1</name>
    <name type="synonym">hypF</name>
    <name type="ordered locus">PHG014</name>
</gene>
<dbReference type="EMBL" id="X70183">
    <property type="protein sequence ID" value="CAA49731.1"/>
    <property type="molecule type" value="Genomic_DNA"/>
</dbReference>
<dbReference type="EMBL" id="AY305378">
    <property type="protein sequence ID" value="AAP85770.1"/>
    <property type="molecule type" value="Genomic_DNA"/>
</dbReference>
<dbReference type="PIR" id="S62601">
    <property type="entry name" value="S29976"/>
</dbReference>
<dbReference type="RefSeq" id="WP_011153939.1">
    <property type="nucleotide sequence ID" value="NC_005241.1"/>
</dbReference>
<dbReference type="SMR" id="P45805"/>
<dbReference type="IntAct" id="P45805">
    <property type="interactions" value="2"/>
</dbReference>
<dbReference type="KEGG" id="reh:PHG014"/>
<dbReference type="eggNOG" id="COG0068">
    <property type="taxonomic scope" value="Bacteria"/>
</dbReference>
<dbReference type="HOGENOM" id="CLU_009164_1_0_4"/>
<dbReference type="OrthoDB" id="9808093at2"/>
<dbReference type="Proteomes" id="UP000008210">
    <property type="component" value="Plasmid megaplasmid pHG1"/>
</dbReference>
<dbReference type="GO" id="GO:0016743">
    <property type="term" value="F:carboxyl- or carbamoyltransferase activity"/>
    <property type="evidence" value="ECO:0007669"/>
    <property type="project" value="TreeGrafter"/>
</dbReference>
<dbReference type="GO" id="GO:0008270">
    <property type="term" value="F:zinc ion binding"/>
    <property type="evidence" value="ECO:0007669"/>
    <property type="project" value="TreeGrafter"/>
</dbReference>
<dbReference type="GO" id="GO:0051604">
    <property type="term" value="P:protein maturation"/>
    <property type="evidence" value="ECO:0007669"/>
    <property type="project" value="TreeGrafter"/>
</dbReference>
<dbReference type="Gene3D" id="1.10.357.160">
    <property type="match status" value="1"/>
</dbReference>
<dbReference type="Gene3D" id="3.30.420.360">
    <property type="match status" value="1"/>
</dbReference>
<dbReference type="Gene3D" id="3.30.420.560">
    <property type="match status" value="1"/>
</dbReference>
<dbReference type="InterPro" id="IPR051060">
    <property type="entry name" value="Carbamoyltrans_HypF-like"/>
</dbReference>
<dbReference type="InterPro" id="IPR041440">
    <property type="entry name" value="HypF_C"/>
</dbReference>
<dbReference type="InterPro" id="IPR055128">
    <property type="entry name" value="HypF_C_2"/>
</dbReference>
<dbReference type="PANTHER" id="PTHR42959">
    <property type="entry name" value="CARBAMOYLTRANSFERASE"/>
    <property type="match status" value="1"/>
</dbReference>
<dbReference type="PANTHER" id="PTHR42959:SF1">
    <property type="entry name" value="CARBAMOYLTRANSFERASE HYPF"/>
    <property type="match status" value="1"/>
</dbReference>
<dbReference type="Pfam" id="PF17788">
    <property type="entry name" value="HypF_C"/>
    <property type="match status" value="1"/>
</dbReference>
<dbReference type="Pfam" id="PF22521">
    <property type="entry name" value="HypF_C_2"/>
    <property type="match status" value="1"/>
</dbReference>
<accession>P45805</accession>
<geneLocation type="plasmid">
    <name>megaplasmid pHG1</name>
</geneLocation>
<protein>
    <recommendedName>
        <fullName evidence="1">Carbamoyltransferase HypF homolog</fullName>
    </recommendedName>
</protein>
<comment type="interaction">
    <interactant intactId="EBI-2265845">
        <id>P45805</id>
    </interactant>
    <interactant intactId="EBI-2265828">
        <id>P31905</id>
        <label>hypE</label>
    </interactant>
    <organismsDiffer>false</organismsDiffer>
    <experiments>2</experiments>
</comment>
<comment type="similarity">
    <text evidence="1">Belongs to the carbamoyltransferase HypF family.</text>
</comment>
<comment type="caution">
    <text>Could be the product of a pseudogene. Lacks the N-terminal half of the protein found in other members of this family.</text>
</comment>
<evidence type="ECO:0000305" key="1"/>
<sequence length="394" mass="40677">MRAQTLPAGSDHAPVLACGAWLKNAACLLRGAEVLWSPIHGDLGDPANCDALDQSVEQLLDSAHGQVQAVAHDLHPDFYSTQLAQRLAARLCVPAVAVQHHHAHIAALMAEYDLREPVIGLALDGVGLGTDGTAWGGELLWVSPSEWCRLGHLQSLPLPGGDVAAREPWRMAAAALHVLDRTGEIGRRYGAVVGEQAARTVAAMLERQLNCPRSSSAGRWFDAAAGALGVSVRQQAEAQAAIALEALAADYLSALSPPECVGTYVVDQDGVLDLRGLLEQLFALADEGQAGQAARGAALFHVALAEALVGWAADAAQGHGLKTVALGGGCFMNGILSASVQAGLAARGLQALLPRAVSCGDAGLALGQAWVAARQPTAALAPQTHLQEEGAPCA</sequence>
<reference key="1">
    <citation type="journal article" date="1993" name="Arch. Microbiol.">
        <title>Analysis of a pleiotropic gene region involved in formation of catalytically active hydrogenases in Alcaligenes eutrophus H16.</title>
        <authorList>
            <person name="Dernedde J."/>
            <person name="Eitinger M."/>
            <person name="Friedrich B."/>
        </authorList>
    </citation>
    <scope>NUCLEOTIDE SEQUENCE [GENOMIC DNA]</scope>
</reference>
<reference key="2">
    <citation type="journal article" date="1996" name="Eur. J. Biochem.">
        <title>hyp gene products in Alcaligenes eutrophus are part of a hydrogenase-maturation system.</title>
        <authorList>
            <person name="Dernedde J."/>
            <person name="Eitinger T."/>
            <person name="Patenge N."/>
            <person name="Friedrich B."/>
        </authorList>
    </citation>
    <scope>SEQUENCE REVISION</scope>
</reference>
<reference key="3">
    <citation type="journal article" date="2003" name="J. Mol. Biol.">
        <title>Complete nucleotide sequence of pHG1: a Ralstonia eutropha H16 megaplasmid encoding key enzymes of H(2)-based lithoautotrophy and anaerobiosis.</title>
        <authorList>
            <person name="Schwartz E."/>
            <person name="Henne A."/>
            <person name="Cramm R."/>
            <person name="Eitinger T."/>
            <person name="Friedrich B."/>
            <person name="Gottschalk G."/>
        </authorList>
    </citation>
    <scope>NUCLEOTIDE SEQUENCE [LARGE SCALE GENOMIC DNA]</scope>
    <source>
        <strain>ATCC 17699 / DSM 428 / KCTC 22496 / NCIMB 10442 / H16 / Stanier 337</strain>
    </source>
</reference>
<proteinExistence type="uncertain"/>